<protein>
    <recommendedName>
        <fullName evidence="1">Small ribosomal subunit protein uS2</fullName>
    </recommendedName>
    <alternativeName>
        <fullName evidence="2">40S ribosomal protein S0</fullName>
    </alternativeName>
</protein>
<feature type="chain" id="PRO_0000389269" description="Small ribosomal subunit protein uS2">
    <location>
        <begin position="1"/>
        <end position="301"/>
    </location>
</feature>
<reference key="1">
    <citation type="journal article" date="2015" name="PLoS Genet.">
        <title>The dynamic genome and transcriptome of the human fungal pathogen Blastomyces and close relative Emmonsia.</title>
        <authorList>
            <person name="Munoz J.F."/>
            <person name="Gauthier G.M."/>
            <person name="Desjardins C.A."/>
            <person name="Gallo J.E."/>
            <person name="Holder J."/>
            <person name="Sullivan T.D."/>
            <person name="Marty A.J."/>
            <person name="Carmen J.C."/>
            <person name="Chen Z."/>
            <person name="Ding L."/>
            <person name="Gujja S."/>
            <person name="Magrini V."/>
            <person name="Misas E."/>
            <person name="Mitreva M."/>
            <person name="Priest M."/>
            <person name="Saif S."/>
            <person name="Whiston E.A."/>
            <person name="Young S."/>
            <person name="Zeng Q."/>
            <person name="Goldman W.E."/>
            <person name="Mardis E.R."/>
            <person name="Taylor J.W."/>
            <person name="McEwen J.G."/>
            <person name="Clay O.K."/>
            <person name="Klein B.S."/>
            <person name="Cuomo C.A."/>
        </authorList>
    </citation>
    <scope>NUCLEOTIDE SEQUENCE [LARGE SCALE GENOMIC DNA]</scope>
    <source>
        <strain>ER-3 / ATCC MYA-2586</strain>
    </source>
</reference>
<comment type="function">
    <text evidence="1">Required for the assembly and/or stability of the 40S ribosomal subunit. Required for the processing of the 20S rRNA-precursor to mature 18S rRNA in a late step of the maturation of 40S ribosomal subunits.</text>
</comment>
<comment type="subunit">
    <text evidence="1">Component of the small ribosomal subunit. Mature ribosomes consist of a small (40S) and a large (60S) subunit. The 40S subunit contains about 33 different proteins and 1 molecule of RNA (18S). The 60S subunit contains about 49 different proteins and 3 molecules of RNA (25S, 5.8S and 5S). Interacts with RPS21.</text>
</comment>
<comment type="subcellular location">
    <subcellularLocation>
        <location evidence="1">Cytoplasm</location>
    </subcellularLocation>
</comment>
<comment type="similarity">
    <text evidence="1">Belongs to the universal ribosomal protein uS2 family.</text>
</comment>
<accession>C5G8P1</accession>
<dbReference type="EMBL" id="EQ999973">
    <property type="protein sequence ID" value="EEQ84115.1"/>
    <property type="molecule type" value="Genomic_DNA"/>
</dbReference>
<dbReference type="SMR" id="C5G8P1"/>
<dbReference type="STRING" id="559297.C5G8P1"/>
<dbReference type="VEuPathDB" id="FungiDB:BDCG_00920"/>
<dbReference type="eggNOG" id="KOG0830">
    <property type="taxonomic scope" value="Eukaryota"/>
</dbReference>
<dbReference type="HOGENOM" id="CLU_058171_0_1_1"/>
<dbReference type="OMA" id="VKNFFEP"/>
<dbReference type="GO" id="GO:0022627">
    <property type="term" value="C:cytosolic small ribosomal subunit"/>
    <property type="evidence" value="ECO:0007669"/>
    <property type="project" value="UniProtKB-UniRule"/>
</dbReference>
<dbReference type="GO" id="GO:0003735">
    <property type="term" value="F:structural constituent of ribosome"/>
    <property type="evidence" value="ECO:0007669"/>
    <property type="project" value="UniProtKB-UniRule"/>
</dbReference>
<dbReference type="GO" id="GO:0000028">
    <property type="term" value="P:ribosomal small subunit assembly"/>
    <property type="evidence" value="ECO:0007669"/>
    <property type="project" value="UniProtKB-UniRule"/>
</dbReference>
<dbReference type="GO" id="GO:0006412">
    <property type="term" value="P:translation"/>
    <property type="evidence" value="ECO:0007669"/>
    <property type="project" value="UniProtKB-UniRule"/>
</dbReference>
<dbReference type="CDD" id="cd01425">
    <property type="entry name" value="RPS2"/>
    <property type="match status" value="1"/>
</dbReference>
<dbReference type="FunFam" id="3.40.50.10490:FF:000010">
    <property type="entry name" value="40S ribosomal protein S0"/>
    <property type="match status" value="1"/>
</dbReference>
<dbReference type="Gene3D" id="3.40.50.10490">
    <property type="entry name" value="Glucose-6-phosphate isomerase like protein, domain 1"/>
    <property type="match status" value="1"/>
</dbReference>
<dbReference type="HAMAP" id="MF_03015">
    <property type="entry name" value="Ribosomal_S2_euk"/>
    <property type="match status" value="1"/>
</dbReference>
<dbReference type="InterPro" id="IPR001865">
    <property type="entry name" value="Ribosomal_uS2"/>
</dbReference>
<dbReference type="InterPro" id="IPR032281">
    <property type="entry name" value="Ribosomal_uS2_C"/>
</dbReference>
<dbReference type="InterPro" id="IPR018130">
    <property type="entry name" value="Ribosomal_uS2_CS"/>
</dbReference>
<dbReference type="InterPro" id="IPR027498">
    <property type="entry name" value="Ribosomal_uS2_euk"/>
</dbReference>
<dbReference type="InterPro" id="IPR005707">
    <property type="entry name" value="Ribosomal_uS2_euk/arc"/>
</dbReference>
<dbReference type="InterPro" id="IPR023591">
    <property type="entry name" value="Ribosomal_uS2_flav_dom_sf"/>
</dbReference>
<dbReference type="NCBIfam" id="TIGR01012">
    <property type="entry name" value="uS2_euk_arch"/>
    <property type="match status" value="1"/>
</dbReference>
<dbReference type="PANTHER" id="PTHR11489">
    <property type="entry name" value="40S RIBOSOMAL PROTEIN SA"/>
    <property type="match status" value="1"/>
</dbReference>
<dbReference type="Pfam" id="PF16122">
    <property type="entry name" value="40S_SA_C"/>
    <property type="match status" value="1"/>
</dbReference>
<dbReference type="Pfam" id="PF00318">
    <property type="entry name" value="Ribosomal_S2"/>
    <property type="match status" value="2"/>
</dbReference>
<dbReference type="PRINTS" id="PR00395">
    <property type="entry name" value="RIBOSOMALS2"/>
</dbReference>
<dbReference type="SUPFAM" id="SSF52313">
    <property type="entry name" value="Ribosomal protein S2"/>
    <property type="match status" value="1"/>
</dbReference>
<dbReference type="PROSITE" id="PS00963">
    <property type="entry name" value="RIBOSOMAL_S2_2"/>
    <property type="match status" value="1"/>
</dbReference>
<keyword id="KW-0963">Cytoplasm</keyword>
<keyword id="KW-0687">Ribonucleoprotein</keyword>
<keyword id="KW-0689">Ribosomal protein</keyword>
<organism>
    <name type="scientific">Ajellomyces dermatitidis (strain ER-3 / ATCC MYA-2586)</name>
    <name type="common">Blastomyces dermatitidis</name>
    <dbReference type="NCBI Taxonomy" id="559297"/>
    <lineage>
        <taxon>Eukaryota</taxon>
        <taxon>Fungi</taxon>
        <taxon>Dikarya</taxon>
        <taxon>Ascomycota</taxon>
        <taxon>Pezizomycotina</taxon>
        <taxon>Eurotiomycetes</taxon>
        <taxon>Eurotiomycetidae</taxon>
        <taxon>Onygenales</taxon>
        <taxon>Ajellomycetaceae</taxon>
        <taxon>Blastomyces</taxon>
    </lineage>
</organism>
<name>RSSA_AJEDR</name>
<gene>
    <name evidence="1" type="primary">RPS0</name>
    <name type="ORF">BDCG_00920</name>
</gene>
<sequence length="301" mass="32214">MAPSNLPPIFNATSQDIEMLLAAQCHLGSKNLQVHMDPYLWKTRPDGINVINIGKTWEKIVLAARIIAAIDNPADVCVISARPYGQRAVLKFAAHTGAAAIAGRFTPGNFTNYITRSFKEPRLIIVTDPRTDHQAIKEASYVNIPVIALCDTDSPTEFVDVAIPTNNKGRHAIGLIWWMLAREVLRLRGTIASRETEWDVVVDLYFYRDPEAEENKEIEEAKVPGAEEVGAAAIESGLVGDSWEAQVAPAFAATGAAVPAGAAPGWEAEAAGEWAASSGAAAGAAETWATDTAAPDAGVKW</sequence>
<proteinExistence type="inferred from homology"/>
<evidence type="ECO:0000255" key="1">
    <source>
        <dbReference type="HAMAP-Rule" id="MF_03015"/>
    </source>
</evidence>
<evidence type="ECO:0000305" key="2"/>